<feature type="chain" id="PRO_1000200194" description="Protein RnfH">
    <location>
        <begin position="1"/>
        <end position="96"/>
    </location>
</feature>
<dbReference type="EMBL" id="AM933173">
    <property type="protein sequence ID" value="CAR38480.1"/>
    <property type="molecule type" value="Genomic_DNA"/>
</dbReference>
<dbReference type="RefSeq" id="WP_001112990.1">
    <property type="nucleotide sequence ID" value="NC_011274.1"/>
</dbReference>
<dbReference type="SMR" id="B5RD94"/>
<dbReference type="KEGG" id="seg:SG2663"/>
<dbReference type="HOGENOM" id="CLU_150721_1_0_6"/>
<dbReference type="Proteomes" id="UP000008321">
    <property type="component" value="Chromosome"/>
</dbReference>
<dbReference type="Gene3D" id="3.10.20.280">
    <property type="entry name" value="RnfH-like"/>
    <property type="match status" value="1"/>
</dbReference>
<dbReference type="HAMAP" id="MF_00460">
    <property type="entry name" value="UPF0125_RnfH"/>
    <property type="match status" value="1"/>
</dbReference>
<dbReference type="InterPro" id="IPR016155">
    <property type="entry name" value="Mopterin_synth/thiamin_S_b"/>
</dbReference>
<dbReference type="InterPro" id="IPR005346">
    <property type="entry name" value="RnfH"/>
</dbReference>
<dbReference type="InterPro" id="IPR037021">
    <property type="entry name" value="RnfH_sf"/>
</dbReference>
<dbReference type="NCBIfam" id="NF002490">
    <property type="entry name" value="PRK01777.1"/>
    <property type="match status" value="1"/>
</dbReference>
<dbReference type="PANTHER" id="PTHR37483">
    <property type="entry name" value="UPF0125 PROTEIN RATB"/>
    <property type="match status" value="1"/>
</dbReference>
<dbReference type="PANTHER" id="PTHR37483:SF1">
    <property type="entry name" value="UPF0125 PROTEIN RATB"/>
    <property type="match status" value="1"/>
</dbReference>
<dbReference type="Pfam" id="PF03658">
    <property type="entry name" value="Ub-RnfH"/>
    <property type="match status" value="1"/>
</dbReference>
<dbReference type="SUPFAM" id="SSF54285">
    <property type="entry name" value="MoaD/ThiS"/>
    <property type="match status" value="1"/>
</dbReference>
<proteinExistence type="inferred from homology"/>
<protein>
    <recommendedName>
        <fullName evidence="1">Protein RnfH</fullName>
    </recommendedName>
</protein>
<name>RNFH_SALG2</name>
<accession>B5RD94</accession>
<evidence type="ECO:0000255" key="1">
    <source>
        <dbReference type="HAMAP-Rule" id="MF_00460"/>
    </source>
</evidence>
<reference key="1">
    <citation type="journal article" date="2008" name="Genome Res.">
        <title>Comparative genome analysis of Salmonella enteritidis PT4 and Salmonella gallinarum 287/91 provides insights into evolutionary and host adaptation pathways.</title>
        <authorList>
            <person name="Thomson N.R."/>
            <person name="Clayton D.J."/>
            <person name="Windhorst D."/>
            <person name="Vernikos G."/>
            <person name="Davidson S."/>
            <person name="Churcher C."/>
            <person name="Quail M.A."/>
            <person name="Stevens M."/>
            <person name="Jones M.A."/>
            <person name="Watson M."/>
            <person name="Barron A."/>
            <person name="Layton A."/>
            <person name="Pickard D."/>
            <person name="Kingsley R.A."/>
            <person name="Bignell A."/>
            <person name="Clark L."/>
            <person name="Harris B."/>
            <person name="Ormond D."/>
            <person name="Abdellah Z."/>
            <person name="Brooks K."/>
            <person name="Cherevach I."/>
            <person name="Chillingworth T."/>
            <person name="Woodward J."/>
            <person name="Norberczak H."/>
            <person name="Lord A."/>
            <person name="Arrowsmith C."/>
            <person name="Jagels K."/>
            <person name="Moule S."/>
            <person name="Mungall K."/>
            <person name="Saunders M."/>
            <person name="Whitehead S."/>
            <person name="Chabalgoity J.A."/>
            <person name="Maskell D."/>
            <person name="Humphreys T."/>
            <person name="Roberts M."/>
            <person name="Barrow P.A."/>
            <person name="Dougan G."/>
            <person name="Parkhill J."/>
        </authorList>
    </citation>
    <scope>NUCLEOTIDE SEQUENCE [LARGE SCALE GENOMIC DNA]</scope>
    <source>
        <strain>287/91 / NCTC 13346</strain>
    </source>
</reference>
<organism>
    <name type="scientific">Salmonella gallinarum (strain 287/91 / NCTC 13346)</name>
    <dbReference type="NCBI Taxonomy" id="550538"/>
    <lineage>
        <taxon>Bacteria</taxon>
        <taxon>Pseudomonadati</taxon>
        <taxon>Pseudomonadota</taxon>
        <taxon>Gammaproteobacteria</taxon>
        <taxon>Enterobacterales</taxon>
        <taxon>Enterobacteriaceae</taxon>
        <taxon>Salmonella</taxon>
    </lineage>
</organism>
<sequence>MPDKLVVEVAYALPEKQYLQRVTLEEGATVEEAIRASGLLELRTDIDLAKNKVGIYSRPVKLTDTVQDGDRVEIYRPLIADPKALRRQRAEKSAGR</sequence>
<comment type="similarity">
    <text evidence="1">Belongs to the UPF0125 (RnfH) family.</text>
</comment>
<gene>
    <name evidence="1" type="primary">rnfH</name>
    <name type="ordered locus">SG2663</name>
</gene>